<protein>
    <recommendedName>
        <fullName>Glutamine synthetase root isozyme 2</fullName>
        <ecNumber>6.3.1.2</ecNumber>
    </recommendedName>
    <alternativeName>
        <fullName>Glutamate--ammonia ligase</fullName>
    </alternativeName>
</protein>
<dbReference type="EC" id="6.3.1.2"/>
<dbReference type="EMBL" id="X65927">
    <property type="protein sequence ID" value="CAA46720.1"/>
    <property type="molecule type" value="mRNA"/>
</dbReference>
<dbReference type="PIR" id="S39478">
    <property type="entry name" value="S39478"/>
</dbReference>
<dbReference type="SMR" id="P38560"/>
<dbReference type="FunCoup" id="P38560">
    <property type="interactions" value="2154"/>
</dbReference>
<dbReference type="STRING" id="4577.P38560"/>
<dbReference type="PaxDb" id="4577-GRMZM2G024104_P01"/>
<dbReference type="MaizeGDB" id="17151"/>
<dbReference type="eggNOG" id="KOG0683">
    <property type="taxonomic scope" value="Eukaryota"/>
</dbReference>
<dbReference type="InParanoid" id="P38560"/>
<dbReference type="Proteomes" id="UP000007305">
    <property type="component" value="Unplaced"/>
</dbReference>
<dbReference type="ExpressionAtlas" id="P38560">
    <property type="expression patterns" value="baseline and differential"/>
</dbReference>
<dbReference type="GO" id="GO:0005737">
    <property type="term" value="C:cytoplasm"/>
    <property type="evidence" value="ECO:0000318"/>
    <property type="project" value="GO_Central"/>
</dbReference>
<dbReference type="GO" id="GO:0005524">
    <property type="term" value="F:ATP binding"/>
    <property type="evidence" value="ECO:0007669"/>
    <property type="project" value="UniProtKB-KW"/>
</dbReference>
<dbReference type="GO" id="GO:0004356">
    <property type="term" value="F:glutamine synthetase activity"/>
    <property type="evidence" value="ECO:0000318"/>
    <property type="project" value="GO_Central"/>
</dbReference>
<dbReference type="GO" id="GO:0006542">
    <property type="term" value="P:glutamine biosynthetic process"/>
    <property type="evidence" value="ECO:0000318"/>
    <property type="project" value="GO_Central"/>
</dbReference>
<dbReference type="FunFam" id="3.10.20.70:FF:000004">
    <property type="entry name" value="Glutamine synthetase"/>
    <property type="match status" value="1"/>
</dbReference>
<dbReference type="FunFam" id="3.30.590.10:FF:000004">
    <property type="entry name" value="Glutamine synthetase"/>
    <property type="match status" value="1"/>
</dbReference>
<dbReference type="Gene3D" id="3.10.20.70">
    <property type="entry name" value="Glutamine synthetase, N-terminal domain"/>
    <property type="match status" value="1"/>
</dbReference>
<dbReference type="Gene3D" id="3.30.590.10">
    <property type="entry name" value="Glutamine synthetase/guanido kinase, catalytic domain"/>
    <property type="match status" value="1"/>
</dbReference>
<dbReference type="InterPro" id="IPR008147">
    <property type="entry name" value="Gln_synt_N"/>
</dbReference>
<dbReference type="InterPro" id="IPR036651">
    <property type="entry name" value="Gln_synt_N_sf"/>
</dbReference>
<dbReference type="InterPro" id="IPR014746">
    <property type="entry name" value="Gln_synth/guanido_kin_cat_dom"/>
</dbReference>
<dbReference type="InterPro" id="IPR008146">
    <property type="entry name" value="Gln_synth_cat_dom"/>
</dbReference>
<dbReference type="InterPro" id="IPR027303">
    <property type="entry name" value="Gln_synth_gly_rich_site"/>
</dbReference>
<dbReference type="InterPro" id="IPR027302">
    <property type="entry name" value="Gln_synth_N_conserv_site"/>
</dbReference>
<dbReference type="InterPro" id="IPR050292">
    <property type="entry name" value="Glutamine_Synthetase"/>
</dbReference>
<dbReference type="PANTHER" id="PTHR20852">
    <property type="entry name" value="GLUTAMINE SYNTHETASE"/>
    <property type="match status" value="1"/>
</dbReference>
<dbReference type="PANTHER" id="PTHR20852:SF92">
    <property type="entry name" value="GLUTAMINE SYNTHETASE CYTOSOLIC ISOZYME 1-3"/>
    <property type="match status" value="1"/>
</dbReference>
<dbReference type="Pfam" id="PF00120">
    <property type="entry name" value="Gln-synt_C"/>
    <property type="match status" value="1"/>
</dbReference>
<dbReference type="Pfam" id="PF03951">
    <property type="entry name" value="Gln-synt_N"/>
    <property type="match status" value="1"/>
</dbReference>
<dbReference type="SMART" id="SM01230">
    <property type="entry name" value="Gln-synt_C"/>
    <property type="match status" value="1"/>
</dbReference>
<dbReference type="SUPFAM" id="SSF54368">
    <property type="entry name" value="Glutamine synthetase, N-terminal domain"/>
    <property type="match status" value="1"/>
</dbReference>
<dbReference type="SUPFAM" id="SSF55931">
    <property type="entry name" value="Glutamine synthetase/guanido kinase"/>
    <property type="match status" value="1"/>
</dbReference>
<dbReference type="PROSITE" id="PS00180">
    <property type="entry name" value="GLNA_1"/>
    <property type="match status" value="1"/>
</dbReference>
<dbReference type="PROSITE" id="PS00181">
    <property type="entry name" value="GLNA_ATP"/>
    <property type="match status" value="1"/>
</dbReference>
<dbReference type="PROSITE" id="PS51986">
    <property type="entry name" value="GS_BETA_GRASP"/>
    <property type="match status" value="1"/>
</dbReference>
<dbReference type="PROSITE" id="PS51987">
    <property type="entry name" value="GS_CATALYTIC"/>
    <property type="match status" value="1"/>
</dbReference>
<keyword id="KW-0067">ATP-binding</keyword>
<keyword id="KW-0963">Cytoplasm</keyword>
<keyword id="KW-0436">Ligase</keyword>
<keyword id="KW-0547">Nucleotide-binding</keyword>
<keyword id="KW-1185">Reference proteome</keyword>
<gene>
    <name type="primary">GLN2</name>
    <name type="synonym">GS1-2</name>
</gene>
<accession>P38560</accession>
<organism>
    <name type="scientific">Zea mays</name>
    <name type="common">Maize</name>
    <dbReference type="NCBI Taxonomy" id="4577"/>
    <lineage>
        <taxon>Eukaryota</taxon>
        <taxon>Viridiplantae</taxon>
        <taxon>Streptophyta</taxon>
        <taxon>Embryophyta</taxon>
        <taxon>Tracheophyta</taxon>
        <taxon>Spermatophyta</taxon>
        <taxon>Magnoliopsida</taxon>
        <taxon>Liliopsida</taxon>
        <taxon>Poales</taxon>
        <taxon>Poaceae</taxon>
        <taxon>PACMAD clade</taxon>
        <taxon>Panicoideae</taxon>
        <taxon>Andropogonodae</taxon>
        <taxon>Andropogoneae</taxon>
        <taxon>Tripsacinae</taxon>
        <taxon>Zea</taxon>
    </lineage>
</organism>
<evidence type="ECO:0000255" key="1">
    <source>
        <dbReference type="PROSITE-ProRule" id="PRU01330"/>
    </source>
</evidence>
<evidence type="ECO:0000255" key="2">
    <source>
        <dbReference type="PROSITE-ProRule" id="PRU01331"/>
    </source>
</evidence>
<evidence type="ECO:0000256" key="3">
    <source>
        <dbReference type="SAM" id="MobiDB-lite"/>
    </source>
</evidence>
<evidence type="ECO:0000305" key="4"/>
<sequence length="368" mass="40094">MALLSDLINLDLSGRTGKIIAEYIWVGGSGMDVRSKARTLSGPVDDPSKLPKWNFDGSSTGQAPGDDSEVILCPRAIFRDPFRKGQNILVMCDCYEPNGEPIPSNKRHGAAKIFSHPDVKAEEPWFGIEQEYTLLQKDTKWPLGWPLAYPGPQGPYYCAAGADKSYGRDIVDCAYKACLYAGIDISGINGEVMPGQWEFQVAPAVGVSAGDQLWVARYILERITEIAGVVVSFDPKPIPGDWNGAGAHTNYSTKSMRSDGGYEVIKKAIGKLGLRHREHIAAYGDGNERPLTGRHETADINTFVWGVPNRGASVRVGRDTEKEGKGYFEDRRPASNMDPYVVTCLIAETTMLWEPSHSNGDGKGAAAP</sequence>
<comment type="function">
    <text>Plays a role in the flow of nitrogen into nitrogenous organic compounds.</text>
</comment>
<comment type="catalytic activity">
    <reaction>
        <text>L-glutamate + NH4(+) + ATP = L-glutamine + ADP + phosphate + H(+)</text>
        <dbReference type="Rhea" id="RHEA:16169"/>
        <dbReference type="ChEBI" id="CHEBI:15378"/>
        <dbReference type="ChEBI" id="CHEBI:28938"/>
        <dbReference type="ChEBI" id="CHEBI:29985"/>
        <dbReference type="ChEBI" id="CHEBI:30616"/>
        <dbReference type="ChEBI" id="CHEBI:43474"/>
        <dbReference type="ChEBI" id="CHEBI:58359"/>
        <dbReference type="ChEBI" id="CHEBI:456216"/>
        <dbReference type="EC" id="6.3.1.2"/>
    </reaction>
</comment>
<comment type="subunit">
    <text>Homooctamer.</text>
</comment>
<comment type="subcellular location">
    <subcellularLocation>
        <location>Cytoplasm</location>
    </subcellularLocation>
</comment>
<comment type="tissue specificity">
    <text>Found mainly in the vascular tissues of seedling roots.</text>
</comment>
<comment type="similarity">
    <text evidence="4">Belongs to the glutamine synthetase family.</text>
</comment>
<proteinExistence type="evidence at transcript level"/>
<name>GLNA2_MAIZE</name>
<feature type="chain" id="PRO_0000153179" description="Glutamine synthetase root isozyme 2">
    <location>
        <begin position="1"/>
        <end position="368"/>
    </location>
</feature>
<feature type="domain" description="GS beta-grasp" evidence="1">
    <location>
        <begin position="19"/>
        <end position="99"/>
    </location>
</feature>
<feature type="domain" description="GS catalytic" evidence="2">
    <location>
        <begin position="106"/>
        <end position="368"/>
    </location>
</feature>
<feature type="region of interest" description="Disordered" evidence="3">
    <location>
        <begin position="38"/>
        <end position="66"/>
    </location>
</feature>
<reference key="1">
    <citation type="journal article" date="1993" name="Plant Mol. Biol.">
        <title>Differential expression of six glutamine synthetase genes in Zea mays.</title>
        <authorList>
            <person name="Li M.-G."/>
            <person name="Villemur R."/>
            <person name="Hussey P.J."/>
            <person name="Silflow C.D."/>
            <person name="Gantt J.S."/>
            <person name="Snustad D.P."/>
        </authorList>
    </citation>
    <scope>NUCLEOTIDE SEQUENCE [MRNA]</scope>
    <source>
        <strain>cv. A188</strain>
        <tissue>Seedling</tissue>
    </source>
</reference>